<evidence type="ECO:0000255" key="1">
    <source>
        <dbReference type="HAMAP-Rule" id="MF_01396"/>
    </source>
</evidence>
<organism>
    <name type="scientific">Pseudomonas fluorescens (strain SBW25)</name>
    <dbReference type="NCBI Taxonomy" id="216595"/>
    <lineage>
        <taxon>Bacteria</taxon>
        <taxon>Pseudomonadati</taxon>
        <taxon>Pseudomonadota</taxon>
        <taxon>Gammaproteobacteria</taxon>
        <taxon>Pseudomonadales</taxon>
        <taxon>Pseudomonadaceae</taxon>
        <taxon>Pseudomonas</taxon>
    </lineage>
</organism>
<dbReference type="EMBL" id="AM181176">
    <property type="protein sequence ID" value="CAY53732.1"/>
    <property type="molecule type" value="Genomic_DNA"/>
</dbReference>
<dbReference type="RefSeq" id="WP_002555987.1">
    <property type="nucleotide sequence ID" value="NC_012660.1"/>
</dbReference>
<dbReference type="SMR" id="C3K1F1"/>
<dbReference type="STRING" id="294.SRM1_00046"/>
<dbReference type="GeneID" id="97918854"/>
<dbReference type="eggNOG" id="ENOG5032S3K">
    <property type="taxonomic scope" value="Bacteria"/>
</dbReference>
<dbReference type="HOGENOM" id="CLU_148047_1_0_6"/>
<dbReference type="OrthoDB" id="9811659at2"/>
<dbReference type="GO" id="GO:0005886">
    <property type="term" value="C:plasma membrane"/>
    <property type="evidence" value="ECO:0007669"/>
    <property type="project" value="UniProtKB-SubCell"/>
</dbReference>
<dbReference type="GO" id="GO:0045259">
    <property type="term" value="C:proton-transporting ATP synthase complex"/>
    <property type="evidence" value="ECO:0007669"/>
    <property type="project" value="UniProtKB-KW"/>
</dbReference>
<dbReference type="GO" id="GO:0033177">
    <property type="term" value="C:proton-transporting two-sector ATPase complex, proton-transporting domain"/>
    <property type="evidence" value="ECO:0007669"/>
    <property type="project" value="InterPro"/>
</dbReference>
<dbReference type="GO" id="GO:0008289">
    <property type="term" value="F:lipid binding"/>
    <property type="evidence" value="ECO:0007669"/>
    <property type="project" value="UniProtKB-KW"/>
</dbReference>
<dbReference type="GO" id="GO:0046933">
    <property type="term" value="F:proton-transporting ATP synthase activity, rotational mechanism"/>
    <property type="evidence" value="ECO:0007669"/>
    <property type="project" value="UniProtKB-UniRule"/>
</dbReference>
<dbReference type="CDD" id="cd18185">
    <property type="entry name" value="ATP-synt_Fo_c_ATPE"/>
    <property type="match status" value="1"/>
</dbReference>
<dbReference type="FunFam" id="1.20.20.10:FF:000002">
    <property type="entry name" value="ATP synthase subunit c"/>
    <property type="match status" value="1"/>
</dbReference>
<dbReference type="Gene3D" id="1.20.20.10">
    <property type="entry name" value="F1F0 ATP synthase subunit C"/>
    <property type="match status" value="1"/>
</dbReference>
<dbReference type="HAMAP" id="MF_01396">
    <property type="entry name" value="ATP_synth_c_bact"/>
    <property type="match status" value="1"/>
</dbReference>
<dbReference type="InterPro" id="IPR005953">
    <property type="entry name" value="ATP_synth_csu_bac/chlpt"/>
</dbReference>
<dbReference type="InterPro" id="IPR000454">
    <property type="entry name" value="ATP_synth_F0_csu"/>
</dbReference>
<dbReference type="InterPro" id="IPR020537">
    <property type="entry name" value="ATP_synth_F0_csu_DDCD_BS"/>
</dbReference>
<dbReference type="InterPro" id="IPR038662">
    <property type="entry name" value="ATP_synth_F0_csu_sf"/>
</dbReference>
<dbReference type="InterPro" id="IPR002379">
    <property type="entry name" value="ATPase_proteolipid_c-like_dom"/>
</dbReference>
<dbReference type="InterPro" id="IPR035921">
    <property type="entry name" value="F/V-ATP_Csub_sf"/>
</dbReference>
<dbReference type="NCBIfam" id="TIGR01260">
    <property type="entry name" value="ATP_synt_c"/>
    <property type="match status" value="1"/>
</dbReference>
<dbReference type="NCBIfam" id="NF005363">
    <property type="entry name" value="PRK06876.1"/>
    <property type="match status" value="1"/>
</dbReference>
<dbReference type="Pfam" id="PF00137">
    <property type="entry name" value="ATP-synt_C"/>
    <property type="match status" value="1"/>
</dbReference>
<dbReference type="PRINTS" id="PR00124">
    <property type="entry name" value="ATPASEC"/>
</dbReference>
<dbReference type="SUPFAM" id="SSF81333">
    <property type="entry name" value="F1F0 ATP synthase subunit C"/>
    <property type="match status" value="1"/>
</dbReference>
<dbReference type="PROSITE" id="PS00605">
    <property type="entry name" value="ATPASE_C"/>
    <property type="match status" value="1"/>
</dbReference>
<name>ATPL_PSEFS</name>
<feature type="chain" id="PRO_1000215164" description="ATP synthase subunit c">
    <location>
        <begin position="1"/>
        <end position="85"/>
    </location>
</feature>
<feature type="transmembrane region" description="Helical" evidence="1">
    <location>
        <begin position="10"/>
        <end position="30"/>
    </location>
</feature>
<feature type="transmembrane region" description="Helical" evidence="1">
    <location>
        <begin position="53"/>
        <end position="73"/>
    </location>
</feature>
<feature type="site" description="Reversibly protonated during proton transport" evidence="1">
    <location>
        <position position="60"/>
    </location>
</feature>
<reference key="1">
    <citation type="journal article" date="2009" name="Genome Biol.">
        <title>Genomic and genetic analyses of diversity and plant interactions of Pseudomonas fluorescens.</title>
        <authorList>
            <person name="Silby M.W."/>
            <person name="Cerdeno-Tarraga A.M."/>
            <person name="Vernikos G.S."/>
            <person name="Giddens S.R."/>
            <person name="Jackson R.W."/>
            <person name="Preston G.M."/>
            <person name="Zhang X.-X."/>
            <person name="Moon C.D."/>
            <person name="Gehrig S.M."/>
            <person name="Godfrey S.A.C."/>
            <person name="Knight C.G."/>
            <person name="Malone J.G."/>
            <person name="Robinson Z."/>
            <person name="Spiers A.J."/>
            <person name="Harris S."/>
            <person name="Challis G.L."/>
            <person name="Yaxley A.M."/>
            <person name="Harris D."/>
            <person name="Seeger K."/>
            <person name="Murphy L."/>
            <person name="Rutter S."/>
            <person name="Squares R."/>
            <person name="Quail M.A."/>
            <person name="Saunders E."/>
            <person name="Mavromatis K."/>
            <person name="Brettin T.S."/>
            <person name="Bentley S.D."/>
            <person name="Hothersall J."/>
            <person name="Stephens E."/>
            <person name="Thomas C.M."/>
            <person name="Parkhill J."/>
            <person name="Levy S.B."/>
            <person name="Rainey P.B."/>
            <person name="Thomson N.R."/>
        </authorList>
    </citation>
    <scope>NUCLEOTIDE SEQUENCE [LARGE SCALE GENOMIC DNA]</scope>
    <source>
        <strain>SBW25</strain>
    </source>
</reference>
<accession>C3K1F1</accession>
<proteinExistence type="inferred from homology"/>
<protein>
    <recommendedName>
        <fullName evidence="1">ATP synthase subunit c</fullName>
    </recommendedName>
    <alternativeName>
        <fullName evidence="1">ATP synthase F(0) sector subunit c</fullName>
    </alternativeName>
    <alternativeName>
        <fullName evidence="1">F-type ATPase subunit c</fullName>
        <shortName evidence="1">F-ATPase subunit c</shortName>
    </alternativeName>
    <alternativeName>
        <fullName evidence="1">Lipid-binding protein</fullName>
    </alternativeName>
</protein>
<comment type="function">
    <text evidence="1">F(1)F(0) ATP synthase produces ATP from ADP in the presence of a proton or sodium gradient. F-type ATPases consist of two structural domains, F(1) containing the extramembraneous catalytic core and F(0) containing the membrane proton channel, linked together by a central stalk and a peripheral stalk. During catalysis, ATP synthesis in the catalytic domain of F(1) is coupled via a rotary mechanism of the central stalk subunits to proton translocation.</text>
</comment>
<comment type="function">
    <text evidence="1">Key component of the F(0) channel; it plays a direct role in translocation across the membrane. A homomeric c-ring of between 10-14 subunits forms the central stalk rotor element with the F(1) delta and epsilon subunits.</text>
</comment>
<comment type="subunit">
    <text evidence="1">F-type ATPases have 2 components, F(1) - the catalytic core - and F(0) - the membrane proton channel. F(1) has five subunits: alpha(3), beta(3), gamma(1), delta(1), epsilon(1). F(0) has three main subunits: a(1), b(2) and c(10-14). The alpha and beta chains form an alternating ring which encloses part of the gamma chain. F(1) is attached to F(0) by a central stalk formed by the gamma and epsilon chains, while a peripheral stalk is formed by the delta and b chains.</text>
</comment>
<comment type="subcellular location">
    <subcellularLocation>
        <location evidence="1">Cell inner membrane</location>
        <topology evidence="1">Multi-pass membrane protein</topology>
    </subcellularLocation>
</comment>
<comment type="similarity">
    <text evidence="1">Belongs to the ATPase C chain family.</text>
</comment>
<sequence length="85" mass="8608">METVVGLTAIAVALLIGLGALGTAIGFGLLGGKFLEGAARQPEMVPMLQVKMFIVAGLLDAVTMIGVGIALFFTFANPFVGQLAG</sequence>
<keyword id="KW-0066">ATP synthesis</keyword>
<keyword id="KW-0997">Cell inner membrane</keyword>
<keyword id="KW-1003">Cell membrane</keyword>
<keyword id="KW-0138">CF(0)</keyword>
<keyword id="KW-0375">Hydrogen ion transport</keyword>
<keyword id="KW-0406">Ion transport</keyword>
<keyword id="KW-0446">Lipid-binding</keyword>
<keyword id="KW-0472">Membrane</keyword>
<keyword id="KW-0812">Transmembrane</keyword>
<keyword id="KW-1133">Transmembrane helix</keyword>
<keyword id="KW-0813">Transport</keyword>
<gene>
    <name evidence="1" type="primary">atpE</name>
    <name type="ordered locus">PFLU_6123</name>
</gene>